<feature type="chain" id="PRO_0000076895" description="Homoaconitase large subunit">
    <location>
        <begin position="1"/>
        <end position="418"/>
    </location>
</feature>
<feature type="binding site" evidence="1">
    <location>
        <position position="292"/>
    </location>
    <ligand>
        <name>[4Fe-4S] cluster</name>
        <dbReference type="ChEBI" id="CHEBI:49883"/>
    </ligand>
</feature>
<feature type="binding site" evidence="1">
    <location>
        <position position="352"/>
    </location>
    <ligand>
        <name>[4Fe-4S] cluster</name>
        <dbReference type="ChEBI" id="CHEBI:49883"/>
    </ligand>
</feature>
<feature type="binding site" evidence="1">
    <location>
        <position position="355"/>
    </location>
    <ligand>
        <name>[4Fe-4S] cluster</name>
        <dbReference type="ChEBI" id="CHEBI:49883"/>
    </ligand>
</feature>
<feature type="sequence conflict" description="In Ref. 3; BAA33786." evidence="4" ref="3">
    <original>TAKDAALEMVRLLTA</original>
    <variation>HGQGRPPWRWVPLLHRP</variation>
    <location>
        <begin position="170"/>
        <end position="184"/>
    </location>
</feature>
<feature type="sequence conflict" description="In Ref. 3; BAA33786." evidence="4" ref="3">
    <original>YMAVEIHLLDGAEALTRGE</original>
    <variation>TWRWRSTLRRATLQRGQ</variation>
    <location>
        <begin position="189"/>
        <end position="207"/>
    </location>
</feature>
<feature type="sequence conflict" description="In Ref. 3; BAA33786." evidence="4" ref="3">
    <original>LAN</original>
    <variation>SQ</variation>
    <location>
        <begin position="211"/>
        <end position="213"/>
    </location>
</feature>
<feature type="sequence conflict" description="In Ref. 3; BAA33786." evidence="4" ref="3">
    <original>AGAKAGLVVPSGEILEMYRVPDWLYPDPDAR</original>
    <variation>RAKRARVALGRSWRCTGARLALSRPRCP</variation>
    <location>
        <begin position="218"/>
        <end position="248"/>
    </location>
</feature>
<comment type="function">
    <text evidence="2 3">Catalyzes the reversible hydration of cis-homoaconitate ((Z)-but-1-ene-1,2,4-tricarboxylate) to homoisocitrate ((1R,2S)-1-hydroxybutane-1,2,4-tricarboxylate). Can catalyze neither the dehydration of (R)-homocitrate ((2R)-2-hydroxybutane-1,2,4-tricarboxylate) into cis-homoaconitate in vitro, nor the reverse reaction. Is not active toward (S)-homocitrate, cis-aconitate or citrate as substrate.</text>
</comment>
<comment type="catalytic activity">
    <reaction evidence="3">
        <text>(2R,3S)-homoisocitrate = cis-homoaconitate + H2O</text>
        <dbReference type="Rhea" id="RHEA:15485"/>
        <dbReference type="ChEBI" id="CHEBI:15377"/>
        <dbReference type="ChEBI" id="CHEBI:15404"/>
        <dbReference type="ChEBI" id="CHEBI:58174"/>
        <dbReference type="EC" id="4.2.1.36"/>
    </reaction>
</comment>
<comment type="cofactor">
    <cofactor evidence="1 3">
        <name>[4Fe-4S] cluster</name>
        <dbReference type="ChEBI" id="CHEBI:49883"/>
    </cofactor>
    <text evidence="1 3">Binds 1 [4Fe-4S] cluster per subunit.</text>
</comment>
<comment type="activity regulation">
    <text evidence="3">Is not inhibited by lysine.</text>
</comment>
<comment type="biophysicochemical properties">
    <kinetics>
        <KM evidence="3">8.2 uM for cis-homoaconitate (at 60 degrees Celsius and pH 8)</KM>
        <KM evidence="3">36 uM for homoisocitrate (at 60 degrees Celsius and pH 8)</KM>
    </kinetics>
    <phDependence>
        <text evidence="3">Optimum pH is 8.0.</text>
    </phDependence>
</comment>
<comment type="pathway">
    <text evidence="2">Amino-acid biosynthesis; L-lysine biosynthesis via AAA pathway; L-alpha-aminoadipate from 2-oxoglutarate: step 3/5.</text>
</comment>
<comment type="subunit">
    <text evidence="4">Heterodimer of HacA and HacB.</text>
</comment>
<comment type="similarity">
    <text evidence="4">Belongs to the aconitase/IPM isomerase family.</text>
</comment>
<comment type="sequence caution" evidence="4">
    <conflict type="erroneous initiation">
        <sequence resource="EMBL-CDS" id="AAS81889"/>
    </conflict>
</comment>
<comment type="sequence caution" evidence="4">
    <conflict type="erroneous initiation">
        <sequence resource="EMBL-CDS" id="BAA33786"/>
    </conflict>
</comment>
<gene>
    <name type="primary">hacA</name>
    <name type="synonym">lys4A</name>
    <name type="synonym">lysT</name>
    <name type="ordered locus">TT_C1547</name>
</gene>
<protein>
    <recommendedName>
        <fullName>Homoaconitase large subunit</fullName>
        <shortName>HACN</shortName>
        <ecNumber>4.2.1.36</ecNumber>
    </recommendedName>
    <alternativeName>
        <fullName>Homoaconitate hydratase</fullName>
    </alternativeName>
</protein>
<keyword id="KW-0004">4Fe-4S</keyword>
<keyword id="KW-0028">Amino-acid biosynthesis</keyword>
<keyword id="KW-0408">Iron</keyword>
<keyword id="KW-0411">Iron-sulfur</keyword>
<keyword id="KW-0456">Lyase</keyword>
<keyword id="KW-0457">Lysine biosynthesis</keyword>
<keyword id="KW-0479">Metal-binding</keyword>
<sequence>MGQTLAEKILSHKVGRPVRAGELVVVEVDQVMVVDSIAGSFFKRLEYLEATPRYPERVSIVIDHVAPAANLEVAKAQKEIREWGKRHGIRVFDVGRGVCHQVLIEEGLAQPGWVVVGSDSHSTTYGAVGAFGTGMGATDIALAAASGRTWLRVPESVKVVFRGRLPKGVTAKDAALEMVRLLTAEGATYMAVEIHLLDGAEALTRGERMTLANLTVEAGAKAGLVVPSGEILEMYRVPDWLYPDPDARYAKEVEIDLSALTPRVSVPFYVDNVHEVAQVKGKRVDQVFIGTCTNGRIEDLRAAAEVLRGRKVAPWVRLLVVPASSQVLEEAARDGTLLTLLEAGATIGTPGCGPCMGRHMGVLAPGEVCVSTSNRNFRGRMGAPDAEIYLASPRVAAASAVAGYLTTPEELEEEEVHA</sequence>
<reference key="1">
    <citation type="journal article" date="1999" name="J. Bacteriol.">
        <title>Aspartate kinase-independent lysine synthesis in an extremely thermophilic bacterium, Thermus thermophilus: lysine is synthesized via alpha-aminoadipic acid not via diaminopimelic acid.</title>
        <authorList>
            <person name="Kobashi N."/>
            <person name="Nishiyama M."/>
            <person name="Tanokura M."/>
        </authorList>
    </citation>
    <scope>NUCLEOTIDE SEQUENCE [GENOMIC DNA]</scope>
</reference>
<reference key="2">
    <citation type="journal article" date="2004" name="Nat. Biotechnol.">
        <title>The genome sequence of the extreme thermophile Thermus thermophilus.</title>
        <authorList>
            <person name="Henne A."/>
            <person name="Brueggemann H."/>
            <person name="Raasch C."/>
            <person name="Wiezer A."/>
            <person name="Hartsch T."/>
            <person name="Liesegang H."/>
            <person name="Johann A."/>
            <person name="Lienard T."/>
            <person name="Gohl O."/>
            <person name="Martinez-Arias R."/>
            <person name="Jacobi C."/>
            <person name="Starkuviene V."/>
            <person name="Schlenczeck S."/>
            <person name="Dencker S."/>
            <person name="Huber R."/>
            <person name="Klenk H.-P."/>
            <person name="Kramer W."/>
            <person name="Merkl R."/>
            <person name="Gottschalk G."/>
            <person name="Fritz H.-J."/>
        </authorList>
    </citation>
    <scope>NUCLEOTIDE SEQUENCE [LARGE SCALE GENOMIC DNA]</scope>
    <source>
        <strain>ATCC BAA-163 / DSM 7039 / HB27</strain>
    </source>
</reference>
<reference key="3">
    <citation type="journal article" date="1998" name="FEMS Microbiol. Lett.">
        <title>Lysine is synthesized through the alpha-aminoadipate pathway in Thermus thermophilus.</title>
        <authorList>
            <person name="Kosuge T."/>
            <person name="Hoshino T."/>
        </authorList>
    </citation>
    <scope>NUCLEOTIDE SEQUENCE [GENOMIC DNA] OF 1-388</scope>
</reference>
<reference key="4">
    <citation type="journal article" date="1999" name="Genome Res.">
        <title>A prokaryotic gene cluster involved in synthesis of lysine through the amino adipate pathway: a key to the evolution of amino acid biosynthesis.</title>
        <authorList>
            <person name="Nishida H."/>
            <person name="Nishiyama M."/>
            <person name="Kobashi N."/>
            <person name="Kosuge T."/>
            <person name="Hoshino T."/>
            <person name="Yamane H."/>
        </authorList>
    </citation>
    <scope>ROLE IN LYSINE BIOSYNTHESIS</scope>
    <scope>PATHWAY</scope>
</reference>
<reference key="5">
    <citation type="journal article" date="2006" name="Biochem. J.">
        <title>Kinetics and product analysis of the reaction catalysed by recombinant homoaconitase from Thermus thermophilus.</title>
        <authorList>
            <person name="Jia Y."/>
            <person name="Tomita T."/>
            <person name="Yamauchi K."/>
            <person name="Nishiyama M."/>
            <person name="Palmer D.R.J."/>
        </authorList>
    </citation>
    <scope>FUNCTION</scope>
    <scope>CATALYTIC ACTIVITY</scope>
    <scope>COFACTOR</scope>
    <scope>SUBSTRATE SPECIFICITY</scope>
    <scope>ACTIVITY REGULATION</scope>
    <scope>BIOPHYSICOCHEMICAL PROPERTIES</scope>
</reference>
<dbReference type="EC" id="4.2.1.36"/>
<dbReference type="EMBL" id="AB017109">
    <property type="protein sequence ID" value="BAA74762.1"/>
    <property type="molecule type" value="mRNA"/>
</dbReference>
<dbReference type="EMBL" id="AE017221">
    <property type="protein sequence ID" value="AAS81889.1"/>
    <property type="status" value="ALT_INIT"/>
    <property type="molecule type" value="Genomic_DNA"/>
</dbReference>
<dbReference type="EMBL" id="AB018379">
    <property type="protein sequence ID" value="BAA33786.1"/>
    <property type="status" value="ALT_INIT"/>
    <property type="molecule type" value="Genomic_DNA"/>
</dbReference>
<dbReference type="PIR" id="T51171">
    <property type="entry name" value="T51171"/>
</dbReference>
<dbReference type="RefSeq" id="WP_041443739.1">
    <property type="nucleotide sequence ID" value="NC_005835.1"/>
</dbReference>
<dbReference type="SMR" id="Q9ZNE0"/>
<dbReference type="KEGG" id="tth:TT_C1547"/>
<dbReference type="eggNOG" id="COG0065">
    <property type="taxonomic scope" value="Bacteria"/>
</dbReference>
<dbReference type="HOGENOM" id="CLU_006714_3_4_0"/>
<dbReference type="BioCyc" id="MetaCyc:MONOMER-6723"/>
<dbReference type="SABIO-RK" id="Q9ZNE0"/>
<dbReference type="UniPathway" id="UPA00033">
    <property type="reaction ID" value="UER01027"/>
</dbReference>
<dbReference type="Proteomes" id="UP000000592">
    <property type="component" value="Chromosome"/>
</dbReference>
<dbReference type="GO" id="GO:0003861">
    <property type="term" value="F:3-isopropylmalate dehydratase activity"/>
    <property type="evidence" value="ECO:0007669"/>
    <property type="project" value="UniProtKB-UniRule"/>
</dbReference>
<dbReference type="GO" id="GO:0051539">
    <property type="term" value="F:4 iron, 4 sulfur cluster binding"/>
    <property type="evidence" value="ECO:0007669"/>
    <property type="project" value="UniProtKB-KW"/>
</dbReference>
<dbReference type="GO" id="GO:0004409">
    <property type="term" value="F:homoaconitate hydratase activity"/>
    <property type="evidence" value="ECO:0007669"/>
    <property type="project" value="UniProtKB-EC"/>
</dbReference>
<dbReference type="GO" id="GO:0046872">
    <property type="term" value="F:metal ion binding"/>
    <property type="evidence" value="ECO:0007669"/>
    <property type="project" value="UniProtKB-KW"/>
</dbReference>
<dbReference type="GO" id="GO:0009098">
    <property type="term" value="P:L-leucine biosynthetic process"/>
    <property type="evidence" value="ECO:0007669"/>
    <property type="project" value="UniProtKB-UniRule"/>
</dbReference>
<dbReference type="GO" id="GO:0019878">
    <property type="term" value="P:lysine biosynthetic process via aminoadipic acid"/>
    <property type="evidence" value="ECO:0007669"/>
    <property type="project" value="UniProtKB-UniPathway"/>
</dbReference>
<dbReference type="CDD" id="cd01583">
    <property type="entry name" value="IPMI"/>
    <property type="match status" value="1"/>
</dbReference>
<dbReference type="Gene3D" id="3.30.499.10">
    <property type="entry name" value="Aconitase, domain 3"/>
    <property type="match status" value="2"/>
</dbReference>
<dbReference type="HAMAP" id="MF_01027">
    <property type="entry name" value="LeuC_type2"/>
    <property type="match status" value="1"/>
</dbReference>
<dbReference type="InterPro" id="IPR015931">
    <property type="entry name" value="Acnase/IPM_dHydase_lsu_aba_1/3"/>
</dbReference>
<dbReference type="InterPro" id="IPR001030">
    <property type="entry name" value="Acoase/IPM_deHydtase_lsu_aba"/>
</dbReference>
<dbReference type="InterPro" id="IPR018136">
    <property type="entry name" value="Aconitase_4Fe-4S_BS"/>
</dbReference>
<dbReference type="InterPro" id="IPR036008">
    <property type="entry name" value="Aconitase_4Fe-4S_dom"/>
</dbReference>
<dbReference type="InterPro" id="IPR011826">
    <property type="entry name" value="HAcnase/IPMdehydase_lsu_prok"/>
</dbReference>
<dbReference type="InterPro" id="IPR006251">
    <property type="entry name" value="Homoacnase/IPMdehydase_lsu"/>
</dbReference>
<dbReference type="InterPro" id="IPR050067">
    <property type="entry name" value="IPM_dehydratase_rel_enz"/>
</dbReference>
<dbReference type="InterPro" id="IPR033941">
    <property type="entry name" value="IPMI_cat"/>
</dbReference>
<dbReference type="NCBIfam" id="TIGR01343">
    <property type="entry name" value="hacA_fam"/>
    <property type="match status" value="1"/>
</dbReference>
<dbReference type="NCBIfam" id="TIGR02086">
    <property type="entry name" value="IPMI_arch"/>
    <property type="match status" value="1"/>
</dbReference>
<dbReference type="NCBIfam" id="NF001614">
    <property type="entry name" value="PRK00402.1"/>
    <property type="match status" value="1"/>
</dbReference>
<dbReference type="PANTHER" id="PTHR43822:SF21">
    <property type="entry name" value="3-ISOPROPYLMALATE DEHYDRATASE LARGE SUBUNIT 1"/>
    <property type="match status" value="1"/>
</dbReference>
<dbReference type="PANTHER" id="PTHR43822">
    <property type="entry name" value="HOMOACONITASE, MITOCHONDRIAL-RELATED"/>
    <property type="match status" value="1"/>
</dbReference>
<dbReference type="Pfam" id="PF00330">
    <property type="entry name" value="Aconitase"/>
    <property type="match status" value="2"/>
</dbReference>
<dbReference type="PRINTS" id="PR00415">
    <property type="entry name" value="ACONITASE"/>
</dbReference>
<dbReference type="SUPFAM" id="SSF53732">
    <property type="entry name" value="Aconitase iron-sulfur domain"/>
    <property type="match status" value="1"/>
</dbReference>
<dbReference type="PROSITE" id="PS00450">
    <property type="entry name" value="ACONITASE_1"/>
    <property type="match status" value="1"/>
</dbReference>
<dbReference type="PROSITE" id="PS01244">
    <property type="entry name" value="ACONITASE_2"/>
    <property type="match status" value="1"/>
</dbReference>
<evidence type="ECO:0000255" key="1">
    <source>
        <dbReference type="HAMAP-Rule" id="MF_01027"/>
    </source>
</evidence>
<evidence type="ECO:0000269" key="2">
    <source>
    </source>
</evidence>
<evidence type="ECO:0000269" key="3">
    <source>
    </source>
</evidence>
<evidence type="ECO:0000305" key="4"/>
<proteinExistence type="evidence at protein level"/>
<organism>
    <name type="scientific">Thermus thermophilus (strain ATCC BAA-163 / DSM 7039 / HB27)</name>
    <dbReference type="NCBI Taxonomy" id="262724"/>
    <lineage>
        <taxon>Bacteria</taxon>
        <taxon>Thermotogati</taxon>
        <taxon>Deinococcota</taxon>
        <taxon>Deinococci</taxon>
        <taxon>Thermales</taxon>
        <taxon>Thermaceae</taxon>
        <taxon>Thermus</taxon>
    </lineage>
</organism>
<accession>Q9ZNE0</accession>
<accession>O87199</accession>
<name>HACA_THET2</name>